<feature type="signal peptide" evidence="1">
    <location>
        <begin position="1"/>
        <end position="21"/>
    </location>
</feature>
<feature type="chain" id="PRO_0000025256" description="Outer membrane protein F">
    <location>
        <begin position="22"/>
        <end position="374"/>
    </location>
</feature>
<feature type="transmembrane region" description="Beta stranded" evidence="1">
    <location>
        <begin position="22"/>
        <end position="27"/>
    </location>
</feature>
<feature type="topological domain" description="Periplasmic" evidence="1">
    <location>
        <position position="28"/>
    </location>
</feature>
<feature type="transmembrane region" description="Beta stranded" evidence="1">
    <location>
        <begin position="29"/>
        <end position="44"/>
    </location>
</feature>
<feature type="topological domain" description="Extracellular" evidence="1">
    <location>
        <begin position="45"/>
        <end position="55"/>
    </location>
</feature>
<feature type="transmembrane region" description="Beta stranded" evidence="1">
    <location>
        <begin position="56"/>
        <end position="68"/>
    </location>
</feature>
<feature type="topological domain" description="Periplasmic" evidence="1">
    <location>
        <begin position="69"/>
        <end position="70"/>
    </location>
</feature>
<feature type="transmembrane region" description="Beta stranded" evidence="1">
    <location>
        <begin position="71"/>
        <end position="83"/>
    </location>
</feature>
<feature type="topological domain" description="Extracellular" evidence="1">
    <location>
        <begin position="84"/>
        <end position="97"/>
    </location>
</feature>
<feature type="transmembrane region" description="Beta stranded" evidence="1">
    <location>
        <begin position="98"/>
        <end position="107"/>
    </location>
</feature>
<feature type="topological domain" description="Periplasmic" evidence="1">
    <location>
        <begin position="108"/>
        <end position="110"/>
    </location>
</feature>
<feature type="transmembrane region" description="Beta stranded" evidence="1">
    <location>
        <begin position="111"/>
        <end position="116"/>
    </location>
</feature>
<feature type="topological domain" description="Extracellular" evidence="1">
    <location>
        <begin position="117"/>
        <end position="151"/>
    </location>
</feature>
<feature type="transmembrane region" description="Beta stranded" evidence="1">
    <location>
        <begin position="152"/>
        <end position="158"/>
    </location>
</feature>
<feature type="topological domain" description="Periplasmic" evidence="1">
    <location>
        <begin position="159"/>
        <end position="166"/>
    </location>
</feature>
<feature type="transmembrane region" description="Beta stranded" evidence="1">
    <location>
        <begin position="167"/>
        <end position="178"/>
    </location>
</feature>
<feature type="topological domain" description="Extracellular" evidence="1">
    <location>
        <begin position="179"/>
        <end position="190"/>
    </location>
</feature>
<feature type="transmembrane region" description="Beta stranded" evidence="1">
    <location>
        <begin position="191"/>
        <end position="201"/>
    </location>
</feature>
<feature type="topological domain" description="Periplasmic" evidence="1">
    <location>
        <begin position="202"/>
        <end position="203"/>
    </location>
</feature>
<feature type="transmembrane region" description="Beta stranded" evidence="1">
    <location>
        <begin position="204"/>
        <end position="216"/>
    </location>
</feature>
<feature type="topological domain" description="Extracellular" evidence="1">
    <location>
        <begin position="217"/>
        <end position="230"/>
    </location>
</feature>
<feature type="transmembrane region" description="Beta stranded" evidence="1">
    <location>
        <begin position="231"/>
        <end position="242"/>
    </location>
</feature>
<feature type="topological domain" description="Periplasmic" evidence="1">
    <location>
        <position position="243"/>
    </location>
</feature>
<feature type="transmembrane region" description="Beta stranded" evidence="1">
    <location>
        <begin position="244"/>
        <end position="255"/>
    </location>
</feature>
<feature type="topological domain" description="Extracellular" evidence="1">
    <location>
        <begin position="256"/>
        <end position="280"/>
    </location>
</feature>
<feature type="transmembrane region" description="Beta stranded" evidence="1">
    <location>
        <begin position="281"/>
        <end position="293"/>
    </location>
</feature>
<feature type="topological domain" description="Periplasmic" evidence="1">
    <location>
        <begin position="294"/>
        <end position="295"/>
    </location>
</feature>
<feature type="transmembrane region" description="Beta stranded" evidence="1">
    <location>
        <begin position="296"/>
        <end position="309"/>
    </location>
</feature>
<feature type="topological domain" description="Extracellular" evidence="1">
    <location>
        <begin position="310"/>
        <end position="322"/>
    </location>
</feature>
<feature type="transmembrane region" description="Beta stranded" evidence="1">
    <location>
        <begin position="323"/>
        <end position="334"/>
    </location>
</feature>
<feature type="topological domain" description="Periplasmic" evidence="1">
    <location>
        <begin position="335"/>
        <end position="336"/>
    </location>
</feature>
<feature type="transmembrane region" description="Beta stranded" evidence="1">
    <location>
        <begin position="337"/>
        <end position="346"/>
    </location>
</feature>
<feature type="topological domain" description="Extracellular" evidence="1">
    <location>
        <begin position="347"/>
        <end position="364"/>
    </location>
</feature>
<feature type="transmembrane region" description="Beta stranded" evidence="1">
    <location>
        <begin position="365"/>
        <end position="374"/>
    </location>
</feature>
<gene>
    <name type="primary">ompF</name>
</gene>
<protein>
    <recommendedName>
        <fullName>Outer membrane protein F</fullName>
    </recommendedName>
    <alternativeName>
        <fullName>Porin OmpF</fullName>
    </alternativeName>
</protein>
<keyword id="KW-0998">Cell outer membrane</keyword>
<keyword id="KW-0406">Ion transport</keyword>
<keyword id="KW-0472">Membrane</keyword>
<keyword id="KW-0626">Porin</keyword>
<keyword id="KW-0732">Signal</keyword>
<keyword id="KW-0812">Transmembrane</keyword>
<keyword id="KW-1134">Transmembrane beta strand</keyword>
<keyword id="KW-0813">Transport</keyword>
<proteinExistence type="inferred from homology"/>
<organism>
    <name type="scientific">Serratia marcescens</name>
    <dbReference type="NCBI Taxonomy" id="615"/>
    <lineage>
        <taxon>Bacteria</taxon>
        <taxon>Pseudomonadati</taxon>
        <taxon>Pseudomonadota</taxon>
        <taxon>Gammaproteobacteria</taxon>
        <taxon>Enterobacterales</taxon>
        <taxon>Yersiniaceae</taxon>
        <taxon>Serratia</taxon>
    </lineage>
</organism>
<accession>O33980</accession>
<comment type="function">
    <text evidence="1">Forms pores that allow passive diffusion of small molecules across the outer membrane.</text>
</comment>
<comment type="subunit">
    <text evidence="1">Homotrimer.</text>
</comment>
<comment type="subcellular location">
    <subcellularLocation>
        <location>Cell outer membrane</location>
        <topology>Multi-pass membrane protein</topology>
    </subcellularLocation>
</comment>
<comment type="similarity">
    <text evidence="2">Belongs to the Gram-negative porin family.</text>
</comment>
<comment type="sequence caution" evidence="2">
    <conflict type="erroneous initiation">
        <sequence resource="EMBL-CDS" id="AAB69103"/>
    </conflict>
</comment>
<sequence length="374" mass="41184">MMKRNILAVVIPALLAAGAANAAEIYNKDGNKLDLYGKVDGLHYFSKDKGNDGDQTYVRFGFKGETQITDQLTGYGQWEYNVQSNHAESQGTEGTKTRLGFAGLKFADYGSFDYGRNYGVLYDVEGWTDMLPEFGGDTYTYSDNFMTGRTNGVATYRNNNFFGLVDGLNFALQYQGKNQNDGRDVKKQNGDGWGISSTYDIGEGVSFGAAYASSNRTDDQKLRSNERGDKADAWTVGAKYDANNVYLAAMYAETRNMTPFGGGNFTNTCAATENCGGFASKTQNFEVTAQYQFDFGLRPEVSYLQSKGKNLNVPGVGSDQDLVKYVSVGTTYYFNKNMSTYVDYKINLLDDNDFTKATGIATDDIVGVGLVYQF</sequence>
<evidence type="ECO:0000250" key="1"/>
<evidence type="ECO:0000305" key="2"/>
<reference key="1">
    <citation type="journal article" date="1997" name="Microbiology">
        <title>Molecular characterization of the Serratia marcescens OmpF porin, and analysis of S. marcescens OmpF and OmpC osmoregulation.</title>
        <authorList>
            <person name="Hutsul J.A.M."/>
            <person name="Worobec E.A."/>
        </authorList>
    </citation>
    <scope>NUCLEOTIDE SEQUENCE [GENOMIC DNA]</scope>
    <source>
        <strain>UOC-51</strain>
    </source>
</reference>
<name>OMPF_SERMA</name>
<dbReference type="EMBL" id="U81967">
    <property type="protein sequence ID" value="AAB69103.1"/>
    <property type="status" value="ALT_INIT"/>
    <property type="molecule type" value="Genomic_DNA"/>
</dbReference>
<dbReference type="SMR" id="O33980"/>
<dbReference type="STRING" id="273526.SMDB11_1014"/>
<dbReference type="GO" id="GO:0009279">
    <property type="term" value="C:cell outer membrane"/>
    <property type="evidence" value="ECO:0007669"/>
    <property type="project" value="UniProtKB-SubCell"/>
</dbReference>
<dbReference type="GO" id="GO:0046930">
    <property type="term" value="C:pore complex"/>
    <property type="evidence" value="ECO:0007669"/>
    <property type="project" value="UniProtKB-KW"/>
</dbReference>
<dbReference type="GO" id="GO:0015288">
    <property type="term" value="F:porin activity"/>
    <property type="evidence" value="ECO:0007669"/>
    <property type="project" value="UniProtKB-KW"/>
</dbReference>
<dbReference type="GO" id="GO:0034220">
    <property type="term" value="P:monoatomic ion transmembrane transport"/>
    <property type="evidence" value="ECO:0007669"/>
    <property type="project" value="InterPro"/>
</dbReference>
<dbReference type="CDD" id="cd00342">
    <property type="entry name" value="gram_neg_porins"/>
    <property type="match status" value="1"/>
</dbReference>
<dbReference type="Gene3D" id="2.40.160.10">
    <property type="entry name" value="Porin"/>
    <property type="match status" value="1"/>
</dbReference>
<dbReference type="InterPro" id="IPR050298">
    <property type="entry name" value="Gram-neg_bact_OMP"/>
</dbReference>
<dbReference type="InterPro" id="IPR033900">
    <property type="entry name" value="Gram_neg_porin_domain"/>
</dbReference>
<dbReference type="InterPro" id="IPR023614">
    <property type="entry name" value="Porin_dom_sf"/>
</dbReference>
<dbReference type="InterPro" id="IPR001897">
    <property type="entry name" value="Porin_gammaproteobac"/>
</dbReference>
<dbReference type="InterPro" id="IPR001702">
    <property type="entry name" value="Porin_Gram-ve"/>
</dbReference>
<dbReference type="InterPro" id="IPR013793">
    <property type="entry name" value="Porin_Gram-ve_CS"/>
</dbReference>
<dbReference type="NCBIfam" id="NF007841">
    <property type="entry name" value="PRK10554.1"/>
    <property type="match status" value="1"/>
</dbReference>
<dbReference type="PANTHER" id="PTHR34501:SF8">
    <property type="entry name" value="OUTER MEMBRANE PORIN N-RELATED"/>
    <property type="match status" value="1"/>
</dbReference>
<dbReference type="PANTHER" id="PTHR34501">
    <property type="entry name" value="PROTEIN YDDL-RELATED"/>
    <property type="match status" value="1"/>
</dbReference>
<dbReference type="Pfam" id="PF00267">
    <property type="entry name" value="Porin_1"/>
    <property type="match status" value="1"/>
</dbReference>
<dbReference type="PRINTS" id="PR00183">
    <property type="entry name" value="ECOLIPORIN"/>
</dbReference>
<dbReference type="PRINTS" id="PR00182">
    <property type="entry name" value="ECOLNEIPORIN"/>
</dbReference>
<dbReference type="SUPFAM" id="SSF56935">
    <property type="entry name" value="Porins"/>
    <property type="match status" value="1"/>
</dbReference>
<dbReference type="PROSITE" id="PS00576">
    <property type="entry name" value="GRAM_NEG_PORIN"/>
    <property type="match status" value="1"/>
</dbReference>